<evidence type="ECO:0000250" key="1">
    <source>
        <dbReference type="UniProtKB" id="P23083"/>
    </source>
</evidence>
<evidence type="ECO:0000255" key="2"/>
<evidence type="ECO:0000255" key="3">
    <source>
        <dbReference type="PROSITE-ProRule" id="PRU00114"/>
    </source>
</evidence>
<evidence type="ECO:0000303" key="4">
    <source>
    </source>
</evidence>
<evidence type="ECO:0000303" key="5">
    <source>
    </source>
</evidence>
<evidence type="ECO:0000303" key="6">
    <source>
    </source>
</evidence>
<evidence type="ECO:0000303" key="7">
    <source>
    </source>
</evidence>
<evidence type="ECO:0000303" key="8">
    <source>
    </source>
</evidence>
<evidence type="ECO:0000303" key="9">
    <source>
    </source>
</evidence>
<evidence type="ECO:0000303" key="10">
    <source>
    </source>
</evidence>
<evidence type="ECO:0000303" key="11">
    <source ref="4"/>
</evidence>
<evidence type="ECO:0000305" key="12"/>
<evidence type="ECO:0000312" key="13">
    <source>
        <dbReference type="HGNC" id="HGNC:5560"/>
    </source>
</evidence>
<accession>P0DTW3</accession>
<gene>
    <name evidence="4 11 13" type="primary">IGHV1-38-4</name>
    <name evidence="8" type="synonym">IGHV1-C</name>
</gene>
<comment type="function">
    <text evidence="5 6 7 9 10">Probable non-functional open reading frame (ORF) of V region of the variable domain of immunoglobulin heavy chains (PubMed:24600447). Non-functional ORF generally cannot participate in the synthesis of a productive immunoglobulin chain due to altered V-(D)-J or switch recombination and/or splicing site (at mRNA level) and/or conserved amino acid change (protein level) (PubMed:9619395). Immunoglobulins, also known as antibodies, are membrane-bound or secreted glycoproteins produced by B lymphocytes. In the recognition phase of humoral immunity, the membrane-bound immunoglobulins serve as receptors which, upon binding of a specific antigen, trigger the clonal expansion and differentiation of B lymphocytes into immunoglobulins-secreting plasma cells. Secreted immunoglobulins mediate the effector phase of humoral immunity, which results in the elimination of bound antigens (PubMed:20176268, PubMed:22158414). The antigen binding site is formed by the variable domain of one heavy chain, together with that of its associated light chain. Thus, each immunoglobulin has two antigen binding sites with remarkable affinity for a particular antigen. The variable domains are assembled by a process called V-(D)-J rearrangement and can then be subjected to somatic hypermutations which, after exposure to antigen and selection, allow affinity maturation for a particular antigen (PubMed:17576170, PubMed:20176268).</text>
</comment>
<comment type="subunit">
    <text evidence="6 12">Most probably, the immunoglobulin is not assembled due to incorrect folding of heavy chain (Probable). Immunoglobulins are composed of two identical heavy chains and two identical light chains; disulfide-linked.</text>
</comment>
<comment type="subcellular location">
    <subcellularLocation>
        <location evidence="6 7">Secreted</location>
    </subcellularLocation>
    <subcellularLocation>
        <location evidence="6 7">Cell membrane</location>
    </subcellularLocation>
</comment>
<comment type="polymorphism">
    <text evidence="12">There are several alleles. The sequence shown is that of IMGT allele IGHV1-38-4*01.</text>
</comment>
<comment type="caution">
    <text evidence="10 12">Most probably a non-functional protein that cannot participate to the synthesis of a productive immunoglobulin chain due to a mutation at position 115, corresponding to the second cysteine from the disulfide bridge, potentially leading to uncorrect folding (PubMed:9619395). Watson et al (PubMed:23541343) identified this gene on chromosome 14. However, it is not currently present on the reference genome assembly (GRCh38/hg38).</text>
</comment>
<protein>
    <recommendedName>
        <fullName evidence="12">Probable non-functional immunoglobulin heavy variable 1-38-4</fullName>
    </recommendedName>
</protein>
<sequence length="117" mass="13137">MDWNWRILFLVVATTGAHSQVQLVQSWAEVRKSGASVKVSCSFSGFTITSYGIHWVQQSPGQGLEWMGWINPGNGSPSYAKKFQGRFTMTRDMSTTTAYTDLSSLTSEDMAVYYYAR</sequence>
<reference key="1">
    <citation type="journal article" date="2013" name="Am. J. Hum. Genet.">
        <title>Complete haplotype sequence of the human immunoglobulin heavy-chain variable, diversity, and joining genes and characterization of allelic and copy-number variation.</title>
        <authorList>
            <person name="Watson C.T."/>
            <person name="Steinberg K.M."/>
            <person name="Huddleston J."/>
            <person name="Warren R.L."/>
            <person name="Malig M."/>
            <person name="Schein J."/>
            <person name="Willsey A.J."/>
            <person name="Joy J.B."/>
            <person name="Scott J.K."/>
            <person name="Graves T.A."/>
            <person name="Wilson R.K."/>
            <person name="Holt R.A."/>
            <person name="Eichler E.E."/>
            <person name="Breden F."/>
        </authorList>
    </citation>
    <scope>NUCLEOTIDE SEQUENCE [GENOMIC DNA] (IMGT ALLELE IGHV1-38-4*01)</scope>
</reference>
<reference key="2">
    <citation type="journal article" date="1998" name="Exp. Clin. Immunogenet.">
        <title>IMGT (ImMunoGeneTics) locus on focus. A new section of Experimental and Clinical Immunogenetics.</title>
        <authorList>
            <person name="Lefranc M.P."/>
        </authorList>
    </citation>
    <scope>CHARACTERIZATION</scope>
</reference>
<reference key="3">
    <citation type="journal article" date="2001" name="Exp. Clin. Immunogenet.">
        <title>Nomenclature of the human immunoglobulin heavy (IGH) genes.</title>
        <authorList>
            <person name="Lefranc M.P."/>
        </authorList>
    </citation>
    <scope>NOMENCLATURE</scope>
</reference>
<reference key="4">
    <citation type="book" date="2001" name="The Immunoglobulin FactsBook.">
        <title>The Immunoglobulin FactsBook.</title>
        <editorList>
            <person name="Lefranc M.P."/>
            <person name="Lefranc G."/>
        </editorList>
        <authorList>
            <person name="Lefranc M.P."/>
            <person name="Lefranc G."/>
        </authorList>
    </citation>
    <scope>NOMENCLATURE</scope>
</reference>
<reference key="5">
    <citation type="journal article" date="2007" name="Annu. Rev. Genet.">
        <title>Immunoglobulin somatic hypermutation.</title>
        <authorList>
            <person name="Teng G."/>
            <person name="Papavasiliou F.N."/>
        </authorList>
    </citation>
    <scope>REVIEW ON SOMATIC HYPERMUTATION</scope>
</reference>
<reference key="6">
    <citation type="journal article" date="2010" name="J. Allergy Clin. Immunol.">
        <title>Structure and function of immunoglobulins.</title>
        <authorList>
            <person name="Schroeder H.W. Jr."/>
            <person name="Cavacini L."/>
        </authorList>
    </citation>
    <scope>REVIEW ON IMMUNOGLOBULINS</scope>
</reference>
<reference key="7">
    <citation type="journal article" date="2012" name="Nat. Rev. Immunol.">
        <title>Molecular programming of B cell memory.</title>
        <authorList>
            <person name="McHeyzer-Williams M."/>
            <person name="Okitsu S."/>
            <person name="Wang N."/>
            <person name="McHeyzer-Williams L."/>
        </authorList>
    </citation>
    <scope>REVIEW ON FUNCTION</scope>
</reference>
<reference key="8">
    <citation type="journal article" date="2014" name="Front. Immunol.">
        <title>Immunoglobulin and T Cell Receptor Genes: IMGT((R)) and the Birth and Rise of Immunoinformatics.</title>
        <authorList>
            <person name="Lefranc M.P."/>
        </authorList>
    </citation>
    <scope>NOMENCLATURE</scope>
</reference>
<proteinExistence type="evidence at protein level"/>
<name>HV384_HUMAN</name>
<feature type="signal peptide" evidence="2">
    <location>
        <begin position="1"/>
        <end position="19"/>
    </location>
</feature>
<feature type="chain" id="PRO_0000450572" description="Probable non-functional immunoglobulin heavy variable 1-38-4" evidence="2">
    <location>
        <begin position="20"/>
        <end position="117"/>
    </location>
</feature>
<feature type="domain" description="Ig-like" evidence="3">
    <location>
        <begin position="20"/>
        <end position="117" status="greater than"/>
    </location>
</feature>
<feature type="region of interest" description="Framework-1" evidence="1">
    <location>
        <begin position="20"/>
        <end position="44"/>
    </location>
</feature>
<feature type="region of interest" description="Complementarity-determining-1" evidence="1">
    <location>
        <begin position="45"/>
        <end position="52"/>
    </location>
</feature>
<feature type="region of interest" description="Framework-2" evidence="1">
    <location>
        <begin position="53"/>
        <end position="69"/>
    </location>
</feature>
<feature type="region of interest" description="Complementarity-determining-2" evidence="1">
    <location>
        <begin position="70"/>
        <end position="77"/>
    </location>
</feature>
<feature type="region of interest" description="Framework-3" evidence="1">
    <location>
        <begin position="78"/>
        <end position="115"/>
    </location>
</feature>
<feature type="region of interest" description="Complementarity-determining-3" evidence="1">
    <location>
        <begin position="116"/>
        <end position="117" status="greater than"/>
    </location>
</feature>
<feature type="glycosylation site" description="N-linked (GlcNAc...) asparagine" evidence="2">
    <location>
        <position position="74"/>
    </location>
</feature>
<feature type="non-terminal residue">
    <location>
        <position position="117"/>
    </location>
</feature>
<dbReference type="EMBL" id="KF698736">
    <property type="status" value="NOT_ANNOTATED_CDS"/>
    <property type="molecule type" value="Genomic_DNA"/>
</dbReference>
<dbReference type="SMR" id="P0DTW3"/>
<dbReference type="FunCoup" id="P0DTW3">
    <property type="interactions" value="283"/>
</dbReference>
<dbReference type="GlyCosmos" id="P0DTW3">
    <property type="glycosylation" value="1 site, No reported glycans"/>
</dbReference>
<dbReference type="GlyGen" id="P0DTW3">
    <property type="glycosylation" value="1 site"/>
</dbReference>
<dbReference type="MassIVE" id="P0DTW3"/>
<dbReference type="PeptideAtlas" id="P0DTW3"/>
<dbReference type="AGR" id="HGNC:5560"/>
<dbReference type="GeneCards" id="IGHV1-38-4"/>
<dbReference type="HGNC" id="HGNC:5560">
    <property type="gene designation" value="IGHV1-38-4"/>
</dbReference>
<dbReference type="neXtProt" id="NX_P0DTW3"/>
<dbReference type="InParanoid" id="P0DTW3"/>
<dbReference type="PRO" id="PR:P0DTW3"/>
<dbReference type="Proteomes" id="UP000005640">
    <property type="component" value="Unplaced"/>
</dbReference>
<dbReference type="GO" id="GO:0005576">
    <property type="term" value="C:extracellular region"/>
    <property type="evidence" value="ECO:0007669"/>
    <property type="project" value="UniProtKB-SubCell"/>
</dbReference>
<dbReference type="GO" id="GO:0019814">
    <property type="term" value="C:immunoglobulin complex"/>
    <property type="evidence" value="ECO:0007669"/>
    <property type="project" value="UniProtKB-KW"/>
</dbReference>
<dbReference type="GO" id="GO:0005886">
    <property type="term" value="C:plasma membrane"/>
    <property type="evidence" value="ECO:0007669"/>
    <property type="project" value="UniProtKB-SubCell"/>
</dbReference>
<dbReference type="GO" id="GO:0003823">
    <property type="term" value="F:antigen binding"/>
    <property type="evidence" value="ECO:0000318"/>
    <property type="project" value="GO_Central"/>
</dbReference>
<dbReference type="GO" id="GO:0016064">
    <property type="term" value="P:immunoglobulin mediated immune response"/>
    <property type="evidence" value="ECO:0000318"/>
    <property type="project" value="GO_Central"/>
</dbReference>
<dbReference type="FunFam" id="2.60.40.10:FF:001072">
    <property type="entry name" value="Immunoglobulin heavy variable V1-24"/>
    <property type="match status" value="1"/>
</dbReference>
<dbReference type="Gene3D" id="2.60.40.10">
    <property type="entry name" value="Immunoglobulins"/>
    <property type="match status" value="1"/>
</dbReference>
<dbReference type="InterPro" id="IPR036179">
    <property type="entry name" value="Ig-like_dom_sf"/>
</dbReference>
<dbReference type="InterPro" id="IPR013783">
    <property type="entry name" value="Ig-like_fold"/>
</dbReference>
<dbReference type="InterPro" id="IPR013106">
    <property type="entry name" value="Ig_V-set"/>
</dbReference>
<dbReference type="InterPro" id="IPR050199">
    <property type="entry name" value="IgHV"/>
</dbReference>
<dbReference type="PANTHER" id="PTHR23266">
    <property type="entry name" value="IMMUNOGLOBULIN HEAVY CHAIN"/>
    <property type="match status" value="1"/>
</dbReference>
<dbReference type="Pfam" id="PF07686">
    <property type="entry name" value="V-set"/>
    <property type="match status" value="1"/>
</dbReference>
<dbReference type="SMART" id="SM00406">
    <property type="entry name" value="IGv"/>
    <property type="match status" value="1"/>
</dbReference>
<dbReference type="SUPFAM" id="SSF48726">
    <property type="entry name" value="Immunoglobulin"/>
    <property type="match status" value="1"/>
</dbReference>
<keyword id="KW-1064">Adaptive immunity</keyword>
<keyword id="KW-1003">Cell membrane</keyword>
<keyword id="KW-1015">Disulfide bond</keyword>
<keyword id="KW-0325">Glycoprotein</keyword>
<keyword id="KW-0391">Immunity</keyword>
<keyword id="KW-1280">Immunoglobulin</keyword>
<keyword id="KW-0393">Immunoglobulin domain</keyword>
<keyword id="KW-0472">Membrane</keyword>
<keyword id="KW-1185">Reference proteome</keyword>
<keyword id="KW-0964">Secreted</keyword>
<keyword id="KW-0732">Signal</keyword>
<organism>
    <name type="scientific">Homo sapiens</name>
    <name type="common">Human</name>
    <dbReference type="NCBI Taxonomy" id="9606"/>
    <lineage>
        <taxon>Eukaryota</taxon>
        <taxon>Metazoa</taxon>
        <taxon>Chordata</taxon>
        <taxon>Craniata</taxon>
        <taxon>Vertebrata</taxon>
        <taxon>Euteleostomi</taxon>
        <taxon>Mammalia</taxon>
        <taxon>Eutheria</taxon>
        <taxon>Euarchontoglires</taxon>
        <taxon>Primates</taxon>
        <taxon>Haplorrhini</taxon>
        <taxon>Catarrhini</taxon>
        <taxon>Hominidae</taxon>
        <taxon>Homo</taxon>
    </lineage>
</organism>